<accession>Q9R0H0</accession>
<accession>A2A850</accession>
<accession>O35616</accession>
<accession>Q3TDG0</accession>
<accession>Q8BYC3</accession>
<proteinExistence type="evidence at protein level"/>
<sequence>MNPDLRKERAAATFNPELITHILDGSPENTRRRREIENLILNDPDFQHEDYNFLTRSQRYEVAVKKSATMVKKMREFGIADPEEIMWFKKLHMVNFVEPVGLNYSMFIPTLLNQGTTAQQEKWMHPSQELQIIGTYAQTEMGHGTHLRGLETTATYDPKTQEFILNSPTVTSIKWWPGGLGKTSNHAIVLAQLITRGECYGLHAFVVPIREIGTHKPLPGITVGDIGPKFGYEEMDNGYLKMDNYRIPRENMLMKYAQVKPDGTYVKPLSNKLTYGTMVFVRSFLVGSAAQSLSKACTIAIRYSAVRRQSEIKRSEPEPQILDFQTQQYKLFPLLATAYAFHFLGRYIKETYMRINESIGQGDLSELPELHALTAGLKAFTTWTANAGIEECRMACGGHGYSHSSGIPNIYVTFTPACTFEGENTVMMLQTARFLMKIYDQVQSGKLVGGMVSYLNDLPSQRIQPQQVAVWPTLVDINSLDSLTEAYKLRAARLVEIAAKNLQAQVSHRKSKEVAWNLTSVDLVRASEAHCHYVTVKVFADKLPKIQDRAVQAVLRNLCLLYSLYGISQKGGDFLEGNIITGAQMSQVNSRILELLTVTRPNAVALVDAFDFKDVTLGSVLGRYDGNVYENLFEWAKKSPLNKTEVHESYYKHLKPLQSKL</sequence>
<dbReference type="EC" id="1.3.3.6" evidence="9 10"/>
<dbReference type="EMBL" id="AF006688">
    <property type="protein sequence ID" value="AAB62926.1"/>
    <property type="molecule type" value="mRNA"/>
</dbReference>
<dbReference type="EMBL" id="AB034914">
    <property type="protein sequence ID" value="BAA86870.1"/>
    <property type="molecule type" value="mRNA"/>
</dbReference>
<dbReference type="EMBL" id="AK040566">
    <property type="protein sequence ID" value="BAC30628.1"/>
    <property type="molecule type" value="mRNA"/>
</dbReference>
<dbReference type="EMBL" id="AK170217">
    <property type="protein sequence ID" value="BAE41642.1"/>
    <property type="status" value="ALT_INIT"/>
    <property type="molecule type" value="mRNA"/>
</dbReference>
<dbReference type="EMBL" id="AL607108">
    <property type="status" value="NOT_ANNOTATED_CDS"/>
    <property type="molecule type" value="Genomic_DNA"/>
</dbReference>
<dbReference type="EMBL" id="AL669925">
    <property type="status" value="NOT_ANNOTATED_CDS"/>
    <property type="molecule type" value="Genomic_DNA"/>
</dbReference>
<dbReference type="EMBL" id="CH466558">
    <property type="protein sequence ID" value="EDL34562.1"/>
    <property type="molecule type" value="Genomic_DNA"/>
</dbReference>
<dbReference type="EMBL" id="CH466558">
    <property type="protein sequence ID" value="EDL34563.1"/>
    <property type="molecule type" value="Genomic_DNA"/>
</dbReference>
<dbReference type="EMBL" id="BC056448">
    <property type="protein sequence ID" value="AAH56448.1"/>
    <property type="molecule type" value="mRNA"/>
</dbReference>
<dbReference type="CCDS" id="CCDS25660.1">
    <molecule id="Q9R0H0-2"/>
</dbReference>
<dbReference type="CCDS" id="CCDS70354.1">
    <molecule id="Q9R0H0-1"/>
</dbReference>
<dbReference type="RefSeq" id="NP_001258827.1">
    <molecule id="Q9R0H0-1"/>
    <property type="nucleotide sequence ID" value="NM_001271898.2"/>
</dbReference>
<dbReference type="RefSeq" id="NP_056544.2">
    <molecule id="Q9R0H0-2"/>
    <property type="nucleotide sequence ID" value="NM_015729.4"/>
</dbReference>
<dbReference type="SMR" id="Q9R0H0"/>
<dbReference type="BioGRID" id="197926">
    <property type="interactions" value="24"/>
</dbReference>
<dbReference type="FunCoup" id="Q9R0H0">
    <property type="interactions" value="2723"/>
</dbReference>
<dbReference type="STRING" id="10090.ENSMUSP00000063325"/>
<dbReference type="GlyGen" id="Q9R0H0">
    <property type="glycosylation" value="1 site, 1 O-linked glycan (1 site)"/>
</dbReference>
<dbReference type="iPTMnet" id="Q9R0H0"/>
<dbReference type="PhosphoSitePlus" id="Q9R0H0"/>
<dbReference type="SwissPalm" id="Q9R0H0"/>
<dbReference type="jPOST" id="Q9R0H0"/>
<dbReference type="PaxDb" id="10090-ENSMUSP00000063325"/>
<dbReference type="PeptideAtlas" id="Q9R0H0"/>
<dbReference type="ProteomicsDB" id="285937">
    <molecule id="Q9R0H0-1"/>
</dbReference>
<dbReference type="ProteomicsDB" id="285938">
    <molecule id="Q9R0H0-2"/>
</dbReference>
<dbReference type="Pumba" id="Q9R0H0"/>
<dbReference type="Antibodypedia" id="19646">
    <property type="antibodies" value="380 antibodies from 31 providers"/>
</dbReference>
<dbReference type="DNASU" id="11430"/>
<dbReference type="Ensembl" id="ENSMUST00000066587.12">
    <molecule id="Q9R0H0-2"/>
    <property type="protein sequence ID" value="ENSMUSP00000063325.6"/>
    <property type="gene ID" value="ENSMUSG00000020777.17"/>
</dbReference>
<dbReference type="Ensembl" id="ENSMUST00000072948.11">
    <molecule id="Q9R0H0-1"/>
    <property type="protein sequence ID" value="ENSMUSP00000072717.5"/>
    <property type="gene ID" value="ENSMUSG00000020777.17"/>
</dbReference>
<dbReference type="GeneID" id="11430"/>
<dbReference type="KEGG" id="mmu:11430"/>
<dbReference type="UCSC" id="uc007mkj.2">
    <molecule id="Q9R0H0-1"/>
    <property type="organism name" value="mouse"/>
</dbReference>
<dbReference type="UCSC" id="uc007mkl.2">
    <molecule id="Q9R0H0-2"/>
    <property type="organism name" value="mouse"/>
</dbReference>
<dbReference type="AGR" id="MGI:1330812"/>
<dbReference type="CTD" id="51"/>
<dbReference type="MGI" id="MGI:1330812">
    <property type="gene designation" value="Acox1"/>
</dbReference>
<dbReference type="VEuPathDB" id="HostDB:ENSMUSG00000020777"/>
<dbReference type="eggNOG" id="KOG0136">
    <property type="taxonomic scope" value="Eukaryota"/>
</dbReference>
<dbReference type="GeneTree" id="ENSGT00940000157287"/>
<dbReference type="HOGENOM" id="CLU_014629_3_1_1"/>
<dbReference type="InParanoid" id="Q9R0H0"/>
<dbReference type="OMA" id="AHAQYMV"/>
<dbReference type="OrthoDB" id="10077at9989"/>
<dbReference type="TreeFam" id="TF300672"/>
<dbReference type="Reactome" id="R-MMU-2046106">
    <property type="pathway name" value="alpha-linolenic acid (ALA) metabolism"/>
</dbReference>
<dbReference type="Reactome" id="R-MMU-390247">
    <property type="pathway name" value="Beta-oxidation of very long chain fatty acids"/>
</dbReference>
<dbReference type="Reactome" id="R-MMU-9033241">
    <property type="pathway name" value="Peroxisomal protein import"/>
</dbReference>
<dbReference type="UniPathway" id="UPA00661"/>
<dbReference type="BioGRID-ORCS" id="11430">
    <property type="hits" value="5 hits in 79 CRISPR screens"/>
</dbReference>
<dbReference type="ChiTaRS" id="Acox1">
    <property type="organism name" value="mouse"/>
</dbReference>
<dbReference type="PRO" id="PR:Q9R0H0"/>
<dbReference type="Proteomes" id="UP000000589">
    <property type="component" value="Chromosome 11"/>
</dbReference>
<dbReference type="RNAct" id="Q9R0H0">
    <property type="molecule type" value="protein"/>
</dbReference>
<dbReference type="Bgee" id="ENSMUSG00000020777">
    <property type="expression patterns" value="Expressed in left lobe of liver and 279 other cell types or tissues"/>
</dbReference>
<dbReference type="ExpressionAtlas" id="Q9R0H0">
    <property type="expression patterns" value="baseline and differential"/>
</dbReference>
<dbReference type="GO" id="GO:0005737">
    <property type="term" value="C:cytoplasm"/>
    <property type="evidence" value="ECO:0000314"/>
    <property type="project" value="MGI"/>
</dbReference>
<dbReference type="GO" id="GO:0005829">
    <property type="term" value="C:cytosol"/>
    <property type="evidence" value="ECO:0000304"/>
    <property type="project" value="Reactome"/>
</dbReference>
<dbReference type="GO" id="GO:0005739">
    <property type="term" value="C:mitochondrion"/>
    <property type="evidence" value="ECO:0007005"/>
    <property type="project" value="MGI"/>
</dbReference>
<dbReference type="GO" id="GO:0005782">
    <property type="term" value="C:peroxisomal matrix"/>
    <property type="evidence" value="ECO:0000315"/>
    <property type="project" value="MGI"/>
</dbReference>
<dbReference type="GO" id="GO:0005778">
    <property type="term" value="C:peroxisomal membrane"/>
    <property type="evidence" value="ECO:0000314"/>
    <property type="project" value="MGI"/>
</dbReference>
<dbReference type="GO" id="GO:0005777">
    <property type="term" value="C:peroxisome"/>
    <property type="evidence" value="ECO:0000314"/>
    <property type="project" value="UniProtKB"/>
</dbReference>
<dbReference type="GO" id="GO:0003997">
    <property type="term" value="F:acyl-CoA oxidase activity"/>
    <property type="evidence" value="ECO:0000315"/>
    <property type="project" value="MGI"/>
</dbReference>
<dbReference type="GO" id="GO:0071949">
    <property type="term" value="F:FAD binding"/>
    <property type="evidence" value="ECO:0007669"/>
    <property type="project" value="InterPro"/>
</dbReference>
<dbReference type="GO" id="GO:0005504">
    <property type="term" value="F:fatty acid binding"/>
    <property type="evidence" value="ECO:0007669"/>
    <property type="project" value="Ensembl"/>
</dbReference>
<dbReference type="GO" id="GO:0016401">
    <property type="term" value="F:palmitoyl-CoA oxidase activity"/>
    <property type="evidence" value="ECO:0007669"/>
    <property type="project" value="Ensembl"/>
</dbReference>
<dbReference type="GO" id="GO:0030165">
    <property type="term" value="F:PDZ domain binding"/>
    <property type="evidence" value="ECO:0000266"/>
    <property type="project" value="MGI"/>
</dbReference>
<dbReference type="GO" id="GO:0042803">
    <property type="term" value="F:protein homodimerization activity"/>
    <property type="evidence" value="ECO:0000250"/>
    <property type="project" value="UniProtKB"/>
</dbReference>
<dbReference type="GO" id="GO:0036109">
    <property type="term" value="P:alpha-linolenic acid metabolic process"/>
    <property type="evidence" value="ECO:0000314"/>
    <property type="project" value="MGI"/>
</dbReference>
<dbReference type="GO" id="GO:0006635">
    <property type="term" value="P:fatty acid beta-oxidation"/>
    <property type="evidence" value="ECO:0000304"/>
    <property type="project" value="MGI"/>
</dbReference>
<dbReference type="GO" id="GO:0009062">
    <property type="term" value="P:fatty acid catabolic process"/>
    <property type="evidence" value="ECO:0000250"/>
    <property type="project" value="UniProtKB"/>
</dbReference>
<dbReference type="GO" id="GO:1901570">
    <property type="term" value="P:fatty acid derivative biosynthetic process"/>
    <property type="evidence" value="ECO:0000314"/>
    <property type="project" value="MGI"/>
</dbReference>
<dbReference type="GO" id="GO:0019395">
    <property type="term" value="P:fatty acid oxidation"/>
    <property type="evidence" value="ECO:0000315"/>
    <property type="project" value="UniProtKB"/>
</dbReference>
<dbReference type="GO" id="GO:0006091">
    <property type="term" value="P:generation of precursor metabolites and energy"/>
    <property type="evidence" value="ECO:0007669"/>
    <property type="project" value="Ensembl"/>
</dbReference>
<dbReference type="GO" id="GO:0050665">
    <property type="term" value="P:hydrogen peroxide biosynthetic process"/>
    <property type="evidence" value="ECO:0000250"/>
    <property type="project" value="UniProtKB"/>
</dbReference>
<dbReference type="GO" id="GO:0042759">
    <property type="term" value="P:long-chain fatty acid biosynthetic process"/>
    <property type="evidence" value="ECO:0000314"/>
    <property type="project" value="MGI"/>
</dbReference>
<dbReference type="GO" id="GO:0006693">
    <property type="term" value="P:prostaglandin metabolic process"/>
    <property type="evidence" value="ECO:0007669"/>
    <property type="project" value="Ensembl"/>
</dbReference>
<dbReference type="GO" id="GO:0007283">
    <property type="term" value="P:spermatogenesis"/>
    <property type="evidence" value="ECO:0000315"/>
    <property type="project" value="MGI"/>
</dbReference>
<dbReference type="GO" id="GO:0006636">
    <property type="term" value="P:unsaturated fatty acid biosynthetic process"/>
    <property type="evidence" value="ECO:0000314"/>
    <property type="project" value="MGI"/>
</dbReference>
<dbReference type="GO" id="GO:0140493">
    <property type="term" value="P:very long-chain fatty acid beta-oxidation"/>
    <property type="evidence" value="ECO:0000250"/>
    <property type="project" value="UniProtKB"/>
</dbReference>
<dbReference type="CDD" id="cd01150">
    <property type="entry name" value="AXO"/>
    <property type="match status" value="1"/>
</dbReference>
<dbReference type="FunFam" id="1.10.540.10:FF:000006">
    <property type="entry name" value="Acyl-coenzyme A oxidase"/>
    <property type="match status" value="1"/>
</dbReference>
<dbReference type="FunFam" id="1.20.140.10:FF:000005">
    <property type="entry name" value="Acyl-coenzyme A oxidase"/>
    <property type="match status" value="1"/>
</dbReference>
<dbReference type="FunFam" id="1.20.140.10:FF:000007">
    <property type="entry name" value="Acyl-coenzyme A oxidase"/>
    <property type="match status" value="1"/>
</dbReference>
<dbReference type="FunFam" id="2.40.110.10:FF:000003">
    <property type="entry name" value="Acyl-coenzyme A oxidase"/>
    <property type="match status" value="1"/>
</dbReference>
<dbReference type="Gene3D" id="1.10.540.10">
    <property type="entry name" value="Acyl-CoA dehydrogenase/oxidase, N-terminal domain"/>
    <property type="match status" value="1"/>
</dbReference>
<dbReference type="Gene3D" id="2.40.110.10">
    <property type="entry name" value="Butyryl-CoA Dehydrogenase, subunit A, domain 2"/>
    <property type="match status" value="1"/>
</dbReference>
<dbReference type="Gene3D" id="1.20.140.10">
    <property type="entry name" value="Butyryl-CoA Dehydrogenase, subunit A, domain 3"/>
    <property type="match status" value="2"/>
</dbReference>
<dbReference type="InterPro" id="IPR034171">
    <property type="entry name" value="ACO"/>
</dbReference>
<dbReference type="InterPro" id="IPR055060">
    <property type="entry name" value="ACOX_C_alpha1"/>
</dbReference>
<dbReference type="InterPro" id="IPR029320">
    <property type="entry name" value="Acyl-CoA_ox_N"/>
</dbReference>
<dbReference type="InterPro" id="IPR006091">
    <property type="entry name" value="Acyl-CoA_Oxase/DH_mid-dom"/>
</dbReference>
<dbReference type="InterPro" id="IPR046373">
    <property type="entry name" value="Acyl-CoA_Oxase/DH_mid-dom_sf"/>
</dbReference>
<dbReference type="InterPro" id="IPR012258">
    <property type="entry name" value="Acyl-CoA_oxidase"/>
</dbReference>
<dbReference type="InterPro" id="IPR002655">
    <property type="entry name" value="Acyl-CoA_oxidase_C"/>
</dbReference>
<dbReference type="InterPro" id="IPR036250">
    <property type="entry name" value="AcylCo_DH-like_C"/>
</dbReference>
<dbReference type="InterPro" id="IPR037069">
    <property type="entry name" value="AcylCoA_DH/ox_N_sf"/>
</dbReference>
<dbReference type="InterPro" id="IPR009100">
    <property type="entry name" value="AcylCoA_DH/oxidase_NM_dom_sf"/>
</dbReference>
<dbReference type="PANTHER" id="PTHR10909">
    <property type="entry name" value="ELECTRON TRANSPORT OXIDOREDUCTASE"/>
    <property type="match status" value="1"/>
</dbReference>
<dbReference type="PANTHER" id="PTHR10909:SF250">
    <property type="entry name" value="PEROXISOMAL ACYL-COENZYME A OXIDASE 1"/>
    <property type="match status" value="1"/>
</dbReference>
<dbReference type="Pfam" id="PF01756">
    <property type="entry name" value="ACOX"/>
    <property type="match status" value="1"/>
</dbReference>
<dbReference type="Pfam" id="PF22924">
    <property type="entry name" value="ACOX_C_alpha1"/>
    <property type="match status" value="1"/>
</dbReference>
<dbReference type="Pfam" id="PF02770">
    <property type="entry name" value="Acyl-CoA_dh_M"/>
    <property type="match status" value="1"/>
</dbReference>
<dbReference type="Pfam" id="PF14749">
    <property type="entry name" value="Acyl-CoA_ox_N"/>
    <property type="match status" value="1"/>
</dbReference>
<dbReference type="PIRSF" id="PIRSF000168">
    <property type="entry name" value="Acyl-CoA_oxidase"/>
    <property type="match status" value="1"/>
</dbReference>
<dbReference type="SUPFAM" id="SSF47203">
    <property type="entry name" value="Acyl-CoA dehydrogenase C-terminal domain-like"/>
    <property type="match status" value="2"/>
</dbReference>
<dbReference type="SUPFAM" id="SSF56645">
    <property type="entry name" value="Acyl-CoA dehydrogenase NM domain-like"/>
    <property type="match status" value="1"/>
</dbReference>
<comment type="function">
    <text evidence="9 10">Involved in the initial and rate-limiting step of peroxisomal beta-oxidation of straight-chain saturated and unsaturated very-long-chain fatty acids. Catalyzes the desaturation of fatty acyl-CoAs such as palmitoyl-CoA (hexadecanoyl-CoA) to 2-trans-enoyl-CoAs ((2E)-enoyl-CoAs) such as (2E)-hexadecenoyl-CoA, and donates electrons directly to molecular oxygen (O(2)), thereby producing hydrogen peroxide (H(2)O(2)).</text>
</comment>
<comment type="function">
    <molecule>Isoform 1</molecule>
    <text evidence="2">Shows highest activity against medium-chain fatty acyl-CoAs. Shows optimum activity with a chain length of 10 carbons (decanoyl-CoA) in vitro.</text>
</comment>
<comment type="function">
    <molecule>Isoform 2</molecule>
    <text evidence="2">Is active against a much broader range of substrates and shows activity towards long-chain acyl-CoAs.</text>
</comment>
<comment type="catalytic activity">
    <reaction evidence="9 10">
        <text>a 2,3-saturated acyl-CoA + O2 = a (2E)-enoyl-CoA + H2O2</text>
        <dbReference type="Rhea" id="RHEA:38959"/>
        <dbReference type="ChEBI" id="CHEBI:15379"/>
        <dbReference type="ChEBI" id="CHEBI:16240"/>
        <dbReference type="ChEBI" id="CHEBI:58856"/>
        <dbReference type="ChEBI" id="CHEBI:65111"/>
        <dbReference type="EC" id="1.3.3.6"/>
    </reaction>
    <physiologicalReaction direction="left-to-right" evidence="9 10">
        <dbReference type="Rhea" id="RHEA:38960"/>
    </physiologicalReaction>
</comment>
<comment type="catalytic activity">
    <reaction evidence="10">
        <text>hexadecanoyl-CoA + O2 = (2E)-hexadecenoyl-CoA + H2O2</text>
        <dbReference type="Rhea" id="RHEA:40167"/>
        <dbReference type="ChEBI" id="CHEBI:15379"/>
        <dbReference type="ChEBI" id="CHEBI:16240"/>
        <dbReference type="ChEBI" id="CHEBI:57379"/>
        <dbReference type="ChEBI" id="CHEBI:61526"/>
    </reaction>
    <physiologicalReaction direction="left-to-right" evidence="10">
        <dbReference type="Rhea" id="RHEA:40168"/>
    </physiologicalReaction>
</comment>
<comment type="catalytic activity">
    <reaction evidence="2">
        <text>dodecanoyl-CoA + O2 = (2E)-dodecenoyl-CoA + H2O2</text>
        <dbReference type="Rhea" id="RHEA:40171"/>
        <dbReference type="ChEBI" id="CHEBI:15379"/>
        <dbReference type="ChEBI" id="CHEBI:16240"/>
        <dbReference type="ChEBI" id="CHEBI:57330"/>
        <dbReference type="ChEBI" id="CHEBI:57375"/>
    </reaction>
    <physiologicalReaction direction="left-to-right" evidence="2">
        <dbReference type="Rhea" id="RHEA:40172"/>
    </physiologicalReaction>
</comment>
<comment type="catalytic activity">
    <reaction evidence="2">
        <text>octanoyl-CoA + O2 = (2E)-octenoyl-CoA + H2O2</text>
        <dbReference type="Rhea" id="RHEA:40175"/>
        <dbReference type="ChEBI" id="CHEBI:15379"/>
        <dbReference type="ChEBI" id="CHEBI:16240"/>
        <dbReference type="ChEBI" id="CHEBI:57386"/>
        <dbReference type="ChEBI" id="CHEBI:62242"/>
    </reaction>
    <physiologicalReaction direction="left-to-right" evidence="2">
        <dbReference type="Rhea" id="RHEA:40176"/>
    </physiologicalReaction>
</comment>
<comment type="catalytic activity">
    <reaction evidence="2">
        <text>decanoyl-CoA + O2 = (2E)-decenoyl-CoA + H2O2</text>
        <dbReference type="Rhea" id="RHEA:40179"/>
        <dbReference type="ChEBI" id="CHEBI:15379"/>
        <dbReference type="ChEBI" id="CHEBI:16240"/>
        <dbReference type="ChEBI" id="CHEBI:61406"/>
        <dbReference type="ChEBI" id="CHEBI:61430"/>
    </reaction>
    <physiologicalReaction direction="left-to-right" evidence="2">
        <dbReference type="Rhea" id="RHEA:40180"/>
    </physiologicalReaction>
</comment>
<comment type="catalytic activity">
    <reaction evidence="2">
        <text>tetradecanoyl-CoA + O2 = (2E)-tetradecenoyl-CoA + H2O2</text>
        <dbReference type="Rhea" id="RHEA:40183"/>
        <dbReference type="ChEBI" id="CHEBI:15379"/>
        <dbReference type="ChEBI" id="CHEBI:16240"/>
        <dbReference type="ChEBI" id="CHEBI:57385"/>
        <dbReference type="ChEBI" id="CHEBI:61405"/>
    </reaction>
    <physiologicalReaction direction="left-to-right" evidence="2">
        <dbReference type="Rhea" id="RHEA:40184"/>
    </physiologicalReaction>
</comment>
<comment type="catalytic activity">
    <reaction evidence="2">
        <text>hexadecanedioyl-CoA + O2 = (2E)-hexadecenedioyl-CoA + H2O2</text>
        <dbReference type="Rhea" id="RHEA:40275"/>
        <dbReference type="ChEBI" id="CHEBI:15379"/>
        <dbReference type="ChEBI" id="CHEBI:16240"/>
        <dbReference type="ChEBI" id="CHEBI:77075"/>
        <dbReference type="ChEBI" id="CHEBI:77085"/>
    </reaction>
    <physiologicalReaction direction="left-to-right" evidence="2">
        <dbReference type="Rhea" id="RHEA:40276"/>
    </physiologicalReaction>
</comment>
<comment type="catalytic activity">
    <reaction evidence="1">
        <text>tetracosanoyl-CoA + O2 = (2E)-tetracosenoyl-CoA + H2O2</text>
        <dbReference type="Rhea" id="RHEA:40319"/>
        <dbReference type="ChEBI" id="CHEBI:15379"/>
        <dbReference type="ChEBI" id="CHEBI:16240"/>
        <dbReference type="ChEBI" id="CHEBI:65052"/>
        <dbReference type="ChEBI" id="CHEBI:74693"/>
    </reaction>
    <physiologicalReaction direction="left-to-right" evidence="1">
        <dbReference type="Rhea" id="RHEA:40320"/>
    </physiologicalReaction>
</comment>
<comment type="catalytic activity">
    <reaction evidence="1">
        <text>glutaryl-CoA + O2 = (2E)-glutaconyl-CoA + H2O2</text>
        <dbReference type="Rhea" id="RHEA:40315"/>
        <dbReference type="ChEBI" id="CHEBI:15379"/>
        <dbReference type="ChEBI" id="CHEBI:16240"/>
        <dbReference type="ChEBI" id="CHEBI:57353"/>
        <dbReference type="ChEBI" id="CHEBI:57378"/>
    </reaction>
    <physiologicalReaction direction="left-to-right" evidence="1">
        <dbReference type="Rhea" id="RHEA:40316"/>
    </physiologicalReaction>
</comment>
<comment type="catalytic activity">
    <reaction evidence="1">
        <text>hexanoyl-CoA + O2 = (2E)-hexenoyl-CoA + H2O2</text>
        <dbReference type="Rhea" id="RHEA:40311"/>
        <dbReference type="ChEBI" id="CHEBI:15379"/>
        <dbReference type="ChEBI" id="CHEBI:16240"/>
        <dbReference type="ChEBI" id="CHEBI:62077"/>
        <dbReference type="ChEBI" id="CHEBI:62620"/>
    </reaction>
    <physiologicalReaction direction="left-to-right" evidence="1">
        <dbReference type="Rhea" id="RHEA:40312"/>
    </physiologicalReaction>
</comment>
<comment type="catalytic activity">
    <reaction evidence="1">
        <text>octadecanoyl-CoA + O2 = (2E)-octadecenoyl-CoA + H2O2</text>
        <dbReference type="Rhea" id="RHEA:38971"/>
        <dbReference type="ChEBI" id="CHEBI:15379"/>
        <dbReference type="ChEBI" id="CHEBI:16240"/>
        <dbReference type="ChEBI" id="CHEBI:57394"/>
        <dbReference type="ChEBI" id="CHEBI:71412"/>
    </reaction>
    <physiologicalReaction direction="left-to-right" evidence="1">
        <dbReference type="Rhea" id="RHEA:38972"/>
    </physiologicalReaction>
</comment>
<comment type="catalytic activity">
    <reaction evidence="2">
        <text>(5Z,8Z,11Z,14Z,17Z)-eicosapentaenoyl-CoA + O2 = (2E,5Z,8Z,11Z,14Z,17Z)-icosahexaenoyl-CoA + H2O2</text>
        <dbReference type="Rhea" id="RHEA:69643"/>
        <dbReference type="ChEBI" id="CHEBI:15379"/>
        <dbReference type="ChEBI" id="CHEBI:16240"/>
        <dbReference type="ChEBI" id="CHEBI:73862"/>
        <dbReference type="ChEBI" id="CHEBI:187901"/>
    </reaction>
    <physiologicalReaction direction="left-to-right" evidence="2">
        <dbReference type="Rhea" id="RHEA:69644"/>
    </physiologicalReaction>
</comment>
<comment type="catalytic activity">
    <reaction evidence="9">
        <text>(6Z,9Z,12Z,15Z,18Z,21Z)-tetracosahexaenoyl-CoA + O2 = (2E,6Z,9Z,12Z,15Z,18Z,21Z)-tetracosaheptaenoyl-CoA + H2O2</text>
        <dbReference type="Rhea" id="RHEA:39119"/>
        <dbReference type="ChEBI" id="CHEBI:15379"/>
        <dbReference type="ChEBI" id="CHEBI:16240"/>
        <dbReference type="ChEBI" id="CHEBI:74086"/>
        <dbReference type="ChEBI" id="CHEBI:76360"/>
    </reaction>
    <physiologicalReaction direction="left-to-right" evidence="9">
        <dbReference type="Rhea" id="RHEA:39120"/>
    </physiologicalReaction>
</comment>
<comment type="cofactor">
    <cofactor evidence="1">
        <name>FAD</name>
        <dbReference type="ChEBI" id="CHEBI:57692"/>
    </cofactor>
</comment>
<comment type="pathway">
    <text evidence="4 5">Lipid metabolism; peroxisomal fatty acid beta-oxidation.</text>
</comment>
<comment type="subunit">
    <text evidence="1 2">Homodimer (By similarity). Interacts with LONP2 (By similarity).</text>
</comment>
<comment type="subcellular location">
    <subcellularLocation>
        <location evidence="1">Peroxisome</location>
    </subcellularLocation>
</comment>
<comment type="alternative products">
    <event type="alternative splicing"/>
    <isoform>
        <id>Q9R0H0-1</id>
        <name>1</name>
        <sequence type="displayed"/>
    </isoform>
    <isoform>
        <id>Q9R0H0-2</id>
        <name>2</name>
        <sequence type="described" ref="VSP_042477"/>
    </isoform>
</comment>
<comment type="tissue specificity">
    <text evidence="5">Highest levels of isoform 1 are found in liver and kidney while highest levels of isoform 2 are found in white adipose tissue. Isoform 1 is expressed at higher levels than isoform 2 in liver and kidney while isoform 2 is expressed at higher levels in brain, heart, lung, muscle, white adipose tissue and testis.</text>
</comment>
<comment type="disruption phenotype">
    <text evidence="4 5">Severe microvesicular hepatic steatosis, sustained activation of Ppara, spontaneous massive peroxisome proliferation and eventual development of hepatocellular carcinomas (PubMed:20195242). Null mice have strikingly increased levels of both n-3 and n-6 very long chain polyunsaturated fatty acids (over twenty-four (24) carbons long) (PubMed:11855929).</text>
</comment>
<comment type="similarity">
    <text evidence="8">Belongs to the acyl-CoA oxidase family.</text>
</comment>
<comment type="sequence caution" evidence="8">
    <conflict type="erroneous initiation">
        <sequence resource="EMBL-CDS" id="BAE41642"/>
    </conflict>
    <text>Truncated N-terminus.</text>
</comment>
<protein>
    <recommendedName>
        <fullName>Peroxisomal acyl-coenzyme A oxidase 1</fullName>
        <shortName>AOX</shortName>
        <ecNumber evidence="9 10">1.3.3.6</ecNumber>
    </recommendedName>
    <alternativeName>
        <fullName evidence="2">Palmitoyl-CoA oxidase</fullName>
    </alternativeName>
    <alternativeName>
        <fullName>Peroxisomal fatty acyl-CoA oxidase</fullName>
    </alternativeName>
    <alternativeName>
        <fullName>Straight-chain acyl-CoA oxidase</fullName>
    </alternativeName>
    <component>
        <recommendedName>
            <fullName evidence="1">Peroxisomal acyl-CoA oxidase 1, A chain</fullName>
        </recommendedName>
    </component>
    <component>
        <recommendedName>
            <fullName evidence="1">Peroxisomal acyl-CoA oxidase 1, B chain</fullName>
        </recommendedName>
    </component>
    <component>
        <recommendedName>
            <fullName evidence="1">Peroxisomal acyl-CoA oxidase 1, C chain</fullName>
        </recommendedName>
    </component>
</protein>
<gene>
    <name evidence="11" type="primary">Acox1</name>
    <name type="synonym">Acox</name>
    <name type="synonym">Paox</name>
</gene>
<reference key="1">
    <citation type="journal article" date="2000" name="Eur. J. Biochem.">
        <title>cDNA cloning and analysis of tissue-specific expression of mouse peroxisomal straight-chain acyl-CoA oxidase.</title>
        <authorList>
            <person name="Nohammer C."/>
            <person name="El-Shabrawi Y."/>
            <person name="Schauer S."/>
            <person name="Hiden M."/>
            <person name="Berger J."/>
            <person name="Forss-Petter S."/>
            <person name="Winter E."/>
            <person name="Eferl R."/>
            <person name="Zechner R."/>
            <person name="Hoefler G."/>
        </authorList>
    </citation>
    <scope>NUCLEOTIDE SEQUENCE [MRNA] (ISOFORM 1)</scope>
</reference>
<reference key="2">
    <citation type="submission" date="1999-11" db="EMBL/GenBank/DDBJ databases">
        <authorList>
            <person name="Saibara T."/>
            <person name="Adachi K."/>
        </authorList>
    </citation>
    <scope>NUCLEOTIDE SEQUENCE [MRNA] (ISOFORM 1)</scope>
    <source>
        <strain>C57BL/6J</strain>
        <tissue>Liver</tissue>
    </source>
</reference>
<reference key="3">
    <citation type="journal article" date="2005" name="Science">
        <title>The transcriptional landscape of the mammalian genome.</title>
        <authorList>
            <person name="Carninci P."/>
            <person name="Kasukawa T."/>
            <person name="Katayama S."/>
            <person name="Gough J."/>
            <person name="Frith M.C."/>
            <person name="Maeda N."/>
            <person name="Oyama R."/>
            <person name="Ravasi T."/>
            <person name="Lenhard B."/>
            <person name="Wells C."/>
            <person name="Kodzius R."/>
            <person name="Shimokawa K."/>
            <person name="Bajic V.B."/>
            <person name="Brenner S.E."/>
            <person name="Batalov S."/>
            <person name="Forrest A.R."/>
            <person name="Zavolan M."/>
            <person name="Davis M.J."/>
            <person name="Wilming L.G."/>
            <person name="Aidinis V."/>
            <person name="Allen J.E."/>
            <person name="Ambesi-Impiombato A."/>
            <person name="Apweiler R."/>
            <person name="Aturaliya R.N."/>
            <person name="Bailey T.L."/>
            <person name="Bansal M."/>
            <person name="Baxter L."/>
            <person name="Beisel K.W."/>
            <person name="Bersano T."/>
            <person name="Bono H."/>
            <person name="Chalk A.M."/>
            <person name="Chiu K.P."/>
            <person name="Choudhary V."/>
            <person name="Christoffels A."/>
            <person name="Clutterbuck D.R."/>
            <person name="Crowe M.L."/>
            <person name="Dalla E."/>
            <person name="Dalrymple B.P."/>
            <person name="de Bono B."/>
            <person name="Della Gatta G."/>
            <person name="di Bernardo D."/>
            <person name="Down T."/>
            <person name="Engstrom P."/>
            <person name="Fagiolini M."/>
            <person name="Faulkner G."/>
            <person name="Fletcher C.F."/>
            <person name="Fukushima T."/>
            <person name="Furuno M."/>
            <person name="Futaki S."/>
            <person name="Gariboldi M."/>
            <person name="Georgii-Hemming P."/>
            <person name="Gingeras T.R."/>
            <person name="Gojobori T."/>
            <person name="Green R.E."/>
            <person name="Gustincich S."/>
            <person name="Harbers M."/>
            <person name="Hayashi Y."/>
            <person name="Hensch T.K."/>
            <person name="Hirokawa N."/>
            <person name="Hill D."/>
            <person name="Huminiecki L."/>
            <person name="Iacono M."/>
            <person name="Ikeo K."/>
            <person name="Iwama A."/>
            <person name="Ishikawa T."/>
            <person name="Jakt M."/>
            <person name="Kanapin A."/>
            <person name="Katoh M."/>
            <person name="Kawasawa Y."/>
            <person name="Kelso J."/>
            <person name="Kitamura H."/>
            <person name="Kitano H."/>
            <person name="Kollias G."/>
            <person name="Krishnan S.P."/>
            <person name="Kruger A."/>
            <person name="Kummerfeld S.K."/>
            <person name="Kurochkin I.V."/>
            <person name="Lareau L.F."/>
            <person name="Lazarevic D."/>
            <person name="Lipovich L."/>
            <person name="Liu J."/>
            <person name="Liuni S."/>
            <person name="McWilliam S."/>
            <person name="Madan Babu M."/>
            <person name="Madera M."/>
            <person name="Marchionni L."/>
            <person name="Matsuda H."/>
            <person name="Matsuzawa S."/>
            <person name="Miki H."/>
            <person name="Mignone F."/>
            <person name="Miyake S."/>
            <person name="Morris K."/>
            <person name="Mottagui-Tabar S."/>
            <person name="Mulder N."/>
            <person name="Nakano N."/>
            <person name="Nakauchi H."/>
            <person name="Ng P."/>
            <person name="Nilsson R."/>
            <person name="Nishiguchi S."/>
            <person name="Nishikawa S."/>
            <person name="Nori F."/>
            <person name="Ohara O."/>
            <person name="Okazaki Y."/>
            <person name="Orlando V."/>
            <person name="Pang K.C."/>
            <person name="Pavan W.J."/>
            <person name="Pavesi G."/>
            <person name="Pesole G."/>
            <person name="Petrovsky N."/>
            <person name="Piazza S."/>
            <person name="Reed J."/>
            <person name="Reid J.F."/>
            <person name="Ring B.Z."/>
            <person name="Ringwald M."/>
            <person name="Rost B."/>
            <person name="Ruan Y."/>
            <person name="Salzberg S.L."/>
            <person name="Sandelin A."/>
            <person name="Schneider C."/>
            <person name="Schoenbach C."/>
            <person name="Sekiguchi K."/>
            <person name="Semple C.A."/>
            <person name="Seno S."/>
            <person name="Sessa L."/>
            <person name="Sheng Y."/>
            <person name="Shibata Y."/>
            <person name="Shimada H."/>
            <person name="Shimada K."/>
            <person name="Silva D."/>
            <person name="Sinclair B."/>
            <person name="Sperling S."/>
            <person name="Stupka E."/>
            <person name="Sugiura K."/>
            <person name="Sultana R."/>
            <person name="Takenaka Y."/>
            <person name="Taki K."/>
            <person name="Tammoja K."/>
            <person name="Tan S.L."/>
            <person name="Tang S."/>
            <person name="Taylor M.S."/>
            <person name="Tegner J."/>
            <person name="Teichmann S.A."/>
            <person name="Ueda H.R."/>
            <person name="van Nimwegen E."/>
            <person name="Verardo R."/>
            <person name="Wei C.L."/>
            <person name="Yagi K."/>
            <person name="Yamanishi H."/>
            <person name="Zabarovsky E."/>
            <person name="Zhu S."/>
            <person name="Zimmer A."/>
            <person name="Hide W."/>
            <person name="Bult C."/>
            <person name="Grimmond S.M."/>
            <person name="Teasdale R.D."/>
            <person name="Liu E.T."/>
            <person name="Brusic V."/>
            <person name="Quackenbush J."/>
            <person name="Wahlestedt C."/>
            <person name="Mattick J.S."/>
            <person name="Hume D.A."/>
            <person name="Kai C."/>
            <person name="Sasaki D."/>
            <person name="Tomaru Y."/>
            <person name="Fukuda S."/>
            <person name="Kanamori-Katayama M."/>
            <person name="Suzuki M."/>
            <person name="Aoki J."/>
            <person name="Arakawa T."/>
            <person name="Iida J."/>
            <person name="Imamura K."/>
            <person name="Itoh M."/>
            <person name="Kato T."/>
            <person name="Kawaji H."/>
            <person name="Kawagashira N."/>
            <person name="Kawashima T."/>
            <person name="Kojima M."/>
            <person name="Kondo S."/>
            <person name="Konno H."/>
            <person name="Nakano K."/>
            <person name="Ninomiya N."/>
            <person name="Nishio T."/>
            <person name="Okada M."/>
            <person name="Plessy C."/>
            <person name="Shibata K."/>
            <person name="Shiraki T."/>
            <person name="Suzuki S."/>
            <person name="Tagami M."/>
            <person name="Waki K."/>
            <person name="Watahiki A."/>
            <person name="Okamura-Oho Y."/>
            <person name="Suzuki H."/>
            <person name="Kawai J."/>
            <person name="Hayashizaki Y."/>
        </authorList>
    </citation>
    <scope>NUCLEOTIDE SEQUENCE [LARGE SCALE MRNA] (ISOFORM 2)</scope>
    <source>
        <strain>C57BL/6J</strain>
        <strain>NOD</strain>
        <tissue>Dendritic cell</tissue>
        <tissue>Thymus</tissue>
    </source>
</reference>
<reference key="4">
    <citation type="journal article" date="2009" name="PLoS Biol.">
        <title>Lineage-specific biology revealed by a finished genome assembly of the mouse.</title>
        <authorList>
            <person name="Church D.M."/>
            <person name="Goodstadt L."/>
            <person name="Hillier L.W."/>
            <person name="Zody M.C."/>
            <person name="Goldstein S."/>
            <person name="She X."/>
            <person name="Bult C.J."/>
            <person name="Agarwala R."/>
            <person name="Cherry J.L."/>
            <person name="DiCuccio M."/>
            <person name="Hlavina W."/>
            <person name="Kapustin Y."/>
            <person name="Meric P."/>
            <person name="Maglott D."/>
            <person name="Birtle Z."/>
            <person name="Marques A.C."/>
            <person name="Graves T."/>
            <person name="Zhou S."/>
            <person name="Teague B."/>
            <person name="Potamousis K."/>
            <person name="Churas C."/>
            <person name="Place M."/>
            <person name="Herschleb J."/>
            <person name="Runnheim R."/>
            <person name="Forrest D."/>
            <person name="Amos-Landgraf J."/>
            <person name="Schwartz D.C."/>
            <person name="Cheng Z."/>
            <person name="Lindblad-Toh K."/>
            <person name="Eichler E.E."/>
            <person name="Ponting C.P."/>
        </authorList>
    </citation>
    <scope>NUCLEOTIDE SEQUENCE [LARGE SCALE GENOMIC DNA]</scope>
    <source>
        <strain>C57BL/6J</strain>
    </source>
</reference>
<reference key="5">
    <citation type="submission" date="2005-07" db="EMBL/GenBank/DDBJ databases">
        <authorList>
            <person name="Mural R.J."/>
            <person name="Adams M.D."/>
            <person name="Myers E.W."/>
            <person name="Smith H.O."/>
            <person name="Venter J.C."/>
        </authorList>
    </citation>
    <scope>NUCLEOTIDE SEQUENCE [LARGE SCALE GENOMIC DNA]</scope>
</reference>
<reference key="6">
    <citation type="journal article" date="2004" name="Genome Res.">
        <title>The status, quality, and expansion of the NIH full-length cDNA project: the Mammalian Gene Collection (MGC).</title>
        <authorList>
            <consortium name="The MGC Project Team"/>
        </authorList>
    </citation>
    <scope>NUCLEOTIDE SEQUENCE [LARGE SCALE MRNA] (ISOFORM 2)</scope>
    <source>
        <strain>C57BL/6J</strain>
        <tissue>Brain</tissue>
    </source>
</reference>
<reference key="7">
    <citation type="journal article" date="2002" name="Mol. Genet. Metab.">
        <title>Straight-chain acyl-CoA oxidase knockout mouse accumulates extremely long chain fatty acids from alpha-linolenic acid: evidence for runaway carousel-type enzyme kinetics in peroxisomal beta-oxidation diseases.</title>
        <authorList>
            <person name="Infante J.P."/>
            <person name="Tschanz C.L."/>
            <person name="Shaw N."/>
            <person name="Michaud A.L."/>
            <person name="Lawrence P."/>
            <person name="Brenna J.T."/>
        </authorList>
    </citation>
    <scope>FUNCTION</scope>
    <scope>CATALYTIC ACTIVITY</scope>
    <scope>DISRUPTION PHENOTYPE</scope>
    <scope>PATHWAY</scope>
</reference>
<reference key="8">
    <citation type="journal article" date="2007" name="Mol. Cell. Proteomics">
        <title>Mitochondrial phosphoproteome revealed by an improved IMAC method and MS/MS/MS.</title>
        <authorList>
            <person name="Lee J."/>
            <person name="Xu Y."/>
            <person name="Chen Y."/>
            <person name="Sprung R."/>
            <person name="Kim S.C."/>
            <person name="Xie S."/>
            <person name="Zhao Y."/>
        </authorList>
    </citation>
    <scope>PHOSPHORYLATION [LARGE SCALE ANALYSIS] AT SER-649</scope>
    <scope>IDENTIFICATION BY MASS SPECTROMETRY [LARGE SCALE ANALYSIS]</scope>
    <source>
        <tissue>Liver</tissue>
    </source>
</reference>
<reference key="9">
    <citation type="journal article" date="2010" name="Cell">
        <title>A tissue-specific atlas of mouse protein phosphorylation and expression.</title>
        <authorList>
            <person name="Huttlin E.L."/>
            <person name="Jedrychowski M.P."/>
            <person name="Elias J.E."/>
            <person name="Goswami T."/>
            <person name="Rad R."/>
            <person name="Beausoleil S.A."/>
            <person name="Villen J."/>
            <person name="Haas W."/>
            <person name="Sowa M.E."/>
            <person name="Gygi S.P."/>
        </authorList>
    </citation>
    <scope>IDENTIFICATION BY MASS SPECTROMETRY [LARGE SCALE ANALYSIS]</scope>
    <source>
        <tissue>Brain</tissue>
        <tissue>Brown adipose tissue</tissue>
        <tissue>Heart</tissue>
        <tissue>Kidney</tissue>
        <tissue>Liver</tissue>
        <tissue>Lung</tissue>
        <tissue>Spleen</tissue>
        <tissue>Testis</tissue>
    </source>
</reference>
<reference key="10">
    <citation type="journal article" date="2010" name="Lab. Invest.">
        <title>Reversal of mouse Acyl-CoA oxidase 1 (ACOX1) null phenotype by human ACOX1b isoform.</title>
        <authorList>
            <person name="Vluggens A."/>
            <person name="Andreoletti P."/>
            <person name="Viswakarma N."/>
            <person name="Jia Y."/>
            <person name="Matsumoto K."/>
            <person name="Kulik W."/>
            <person name="Khan M."/>
            <person name="Huang J."/>
            <person name="Guo D."/>
            <person name="Yu S."/>
            <person name="Sarkar J."/>
            <person name="Singh I."/>
            <person name="Rao M.S."/>
            <person name="Wanders R.J."/>
            <person name="Reddy J.K."/>
            <person name="Cherkaoui-Malki M."/>
        </authorList>
    </citation>
    <scope>TISSUE SPECIFICITY</scope>
    <scope>DISRUPTION PHENOTYPE</scope>
    <scope>CATALYTIC ACTIVITY</scope>
    <scope>FUNCTION</scope>
    <scope>PATHWAY</scope>
</reference>
<reference key="11">
    <citation type="journal article" date="2013" name="Mol. Cell">
        <title>SIRT5-mediated lysine desuccinylation impacts diverse metabolic pathways.</title>
        <authorList>
            <person name="Park J."/>
            <person name="Chen Y."/>
            <person name="Tishkoff D.X."/>
            <person name="Peng C."/>
            <person name="Tan M."/>
            <person name="Dai L."/>
            <person name="Xie Z."/>
            <person name="Zhang Y."/>
            <person name="Zwaans B.M."/>
            <person name="Skinner M.E."/>
            <person name="Lombard D.B."/>
            <person name="Zhao Y."/>
        </authorList>
    </citation>
    <scope>SUCCINYLATION [LARGE SCALE ANALYSIS] AT LYS-89; LYS-90; LYS-159; LYS-241; LYS-349; LYS-437; LYS-446; LYS-512; LYS-542; LYS-637; LYS-643 AND LYS-655</scope>
    <scope>IDENTIFICATION BY MASS SPECTROMETRY [LARGE SCALE ANALYSIS]</scope>
    <source>
        <tissue>Liver</tissue>
    </source>
</reference>
<reference key="12">
    <citation type="journal article" date="2013" name="Proc. Natl. Acad. Sci. U.S.A.">
        <title>Label-free quantitative proteomics of the lysine acetylome in mitochondria identifies substrates of SIRT3 in metabolic pathways.</title>
        <authorList>
            <person name="Rardin M.J."/>
            <person name="Newman J.C."/>
            <person name="Held J.M."/>
            <person name="Cusack M.P."/>
            <person name="Sorensen D.J."/>
            <person name="Li B."/>
            <person name="Schilling B."/>
            <person name="Mooney S.D."/>
            <person name="Kahn C.R."/>
            <person name="Verdin E."/>
            <person name="Gibson B.W."/>
        </authorList>
    </citation>
    <scope>ACETYLATION [LARGE SCALE ANALYSIS] AT LYS-65; LYS-216; LYS-267; LYS-272; LYS-437; LYS-446; LYS-512; LYS-637 AND LYS-652</scope>
    <scope>IDENTIFICATION BY MASS SPECTROMETRY [LARGE SCALE ANALYSIS]</scope>
    <source>
        <tissue>Liver</tissue>
    </source>
</reference>
<name>ACOX1_MOUSE</name>
<evidence type="ECO:0000250" key="1">
    <source>
        <dbReference type="UniProtKB" id="P07872"/>
    </source>
</evidence>
<evidence type="ECO:0000250" key="2">
    <source>
        <dbReference type="UniProtKB" id="Q15067"/>
    </source>
</evidence>
<evidence type="ECO:0000255" key="3"/>
<evidence type="ECO:0000269" key="4">
    <source>
    </source>
</evidence>
<evidence type="ECO:0000269" key="5">
    <source>
    </source>
</evidence>
<evidence type="ECO:0000303" key="6">
    <source>
    </source>
</evidence>
<evidence type="ECO:0000303" key="7">
    <source>
    </source>
</evidence>
<evidence type="ECO:0000305" key="8"/>
<evidence type="ECO:0000305" key="9">
    <source>
    </source>
</evidence>
<evidence type="ECO:0000305" key="10">
    <source>
    </source>
</evidence>
<evidence type="ECO:0000312" key="11">
    <source>
        <dbReference type="MGI" id="MGI:1330812"/>
    </source>
</evidence>
<evidence type="ECO:0007744" key="12">
    <source>
    </source>
</evidence>
<evidence type="ECO:0007744" key="13">
    <source>
    </source>
</evidence>
<evidence type="ECO:0007744" key="14">
    <source>
    </source>
</evidence>
<feature type="chain" id="PRO_0000204678" description="Peroxisomal acyl-CoA oxidase 1, A chain">
    <location>
        <begin position="1"/>
        <end position="661"/>
    </location>
</feature>
<feature type="chain" id="PRO_0000447502" description="Peroxisomal acyl-CoA oxidase 1, B chain" evidence="1">
    <location>
        <begin position="1"/>
        <end position="438"/>
    </location>
</feature>
<feature type="chain" id="PRO_0000447503" description="Peroxisomal acyl-CoA oxidase 1, C chain" evidence="1">
    <location>
        <begin position="439"/>
        <end position="661"/>
    </location>
</feature>
<feature type="short sequence motif" description="Microbody targeting signal" evidence="3">
    <location>
        <begin position="659"/>
        <end position="661"/>
    </location>
</feature>
<feature type="active site" description="Proton acceptor" evidence="1">
    <location>
        <position position="421"/>
    </location>
</feature>
<feature type="binding site" evidence="1">
    <location>
        <position position="139"/>
    </location>
    <ligand>
        <name>FAD</name>
        <dbReference type="ChEBI" id="CHEBI:57692"/>
    </ligand>
</feature>
<feature type="binding site" evidence="1">
    <location>
        <position position="178"/>
    </location>
    <ligand>
        <name>FAD</name>
        <dbReference type="ChEBI" id="CHEBI:57692"/>
    </ligand>
</feature>
<feature type="site" description="Cleavage" evidence="1">
    <location>
        <begin position="468"/>
        <end position="469"/>
    </location>
</feature>
<feature type="modified residue" description="Phosphoserine" evidence="2">
    <location>
        <position position="26"/>
    </location>
</feature>
<feature type="modified residue" description="N6-acetyllysine" evidence="13">
    <location>
        <position position="65"/>
    </location>
</feature>
<feature type="modified residue" description="N6-succinyllysine" evidence="14">
    <location>
        <position position="89"/>
    </location>
</feature>
<feature type="modified residue" description="N6-succinyllysine" evidence="14">
    <location>
        <position position="90"/>
    </location>
</feature>
<feature type="modified residue" description="N6-succinyllysine" evidence="14">
    <location>
        <position position="159"/>
    </location>
</feature>
<feature type="modified residue" description="N6-acetyllysine" evidence="13">
    <location>
        <position position="216"/>
    </location>
</feature>
<feature type="modified residue" description="N6-succinyllysine" evidence="14">
    <location>
        <position position="241"/>
    </location>
</feature>
<feature type="modified residue" description="N6-acetyllysine" evidence="2">
    <location>
        <position position="255"/>
    </location>
</feature>
<feature type="modified residue" description="N6-acetyllysine" evidence="13">
    <location>
        <position position="267"/>
    </location>
</feature>
<feature type="modified residue" description="N6-acetyllysine" evidence="13">
    <location>
        <position position="272"/>
    </location>
</feature>
<feature type="modified residue" description="N6-succinyllysine" evidence="14">
    <location>
        <position position="349"/>
    </location>
</feature>
<feature type="modified residue" description="N6-acetyllysine; alternate" evidence="13">
    <location>
        <position position="437"/>
    </location>
</feature>
<feature type="modified residue" description="N6-succinyllysine; alternate" evidence="14">
    <location>
        <position position="437"/>
    </location>
</feature>
<feature type="modified residue" description="N6-acetyllysine; alternate" evidence="13">
    <location>
        <position position="446"/>
    </location>
</feature>
<feature type="modified residue" description="N6-succinyllysine; alternate" evidence="14">
    <location>
        <position position="446"/>
    </location>
</feature>
<feature type="modified residue" description="N6-acetyllysine" evidence="2">
    <location>
        <position position="500"/>
    </location>
</feature>
<feature type="modified residue" description="N6-acetyllysine; alternate" evidence="13">
    <location>
        <position position="512"/>
    </location>
</feature>
<feature type="modified residue" description="N6-succinyllysine; alternate" evidence="14">
    <location>
        <position position="512"/>
    </location>
</feature>
<feature type="modified residue" description="N6-succinyllysine" evidence="14">
    <location>
        <position position="542"/>
    </location>
</feature>
<feature type="modified residue" description="N6-acetyllysine; alternate" evidence="13">
    <location>
        <position position="637"/>
    </location>
</feature>
<feature type="modified residue" description="N6-succinyllysine; alternate" evidence="14">
    <location>
        <position position="637"/>
    </location>
</feature>
<feature type="modified residue" description="N6-succinyllysine" evidence="14">
    <location>
        <position position="643"/>
    </location>
</feature>
<feature type="modified residue" description="Phosphoserine" evidence="12">
    <location>
        <position position="649"/>
    </location>
</feature>
<feature type="modified residue" description="N6-acetyllysine" evidence="13">
    <location>
        <position position="652"/>
    </location>
</feature>
<feature type="modified residue" description="N6-succinyllysine" evidence="14">
    <location>
        <position position="655"/>
    </location>
</feature>
<feature type="splice variant" id="VSP_042477" description="In isoform 2." evidence="6 7">
    <original>KLHMVNFVEPVGLNYSMFIPTLLNQGTTAQQEKWMHPSQELQII</original>
    <variation>NSVHRGHPEPLDLHLGMFLPTLLHQATEEQQERFFMPAWNLEIT</variation>
    <location>
        <begin position="90"/>
        <end position="133"/>
    </location>
</feature>
<feature type="sequence conflict" description="In Ref. 1; AAB62926." evidence="8" ref="1">
    <original>I</original>
    <variation>V</variation>
    <location>
        <position position="22"/>
    </location>
</feature>
<feature type="sequence conflict" description="In Ref. 3; BAE41642." evidence="8" ref="3">
    <original>G</original>
    <variation>D</variation>
    <location>
        <position position="263"/>
    </location>
</feature>
<feature type="sequence conflict" description="In Ref. 3; BAE41642." evidence="8" ref="3">
    <original>W</original>
    <variation>R</variation>
    <location>
        <position position="516"/>
    </location>
</feature>
<feature type="sequence conflict" description="In Ref. 3; BAE41642." evidence="8" ref="3">
    <original>L</original>
    <variation>I</variation>
    <location>
        <position position="523"/>
    </location>
</feature>
<feature type="sequence conflict" description="In Ref. 1; AAB62926." evidence="8" ref="1">
    <original>E</original>
    <variation>Q</variation>
    <location>
        <position position="648"/>
    </location>
</feature>
<organism>
    <name type="scientific">Mus musculus</name>
    <name type="common">Mouse</name>
    <dbReference type="NCBI Taxonomy" id="10090"/>
    <lineage>
        <taxon>Eukaryota</taxon>
        <taxon>Metazoa</taxon>
        <taxon>Chordata</taxon>
        <taxon>Craniata</taxon>
        <taxon>Vertebrata</taxon>
        <taxon>Euteleostomi</taxon>
        <taxon>Mammalia</taxon>
        <taxon>Eutheria</taxon>
        <taxon>Euarchontoglires</taxon>
        <taxon>Glires</taxon>
        <taxon>Rodentia</taxon>
        <taxon>Myomorpha</taxon>
        <taxon>Muroidea</taxon>
        <taxon>Muridae</taxon>
        <taxon>Murinae</taxon>
        <taxon>Mus</taxon>
        <taxon>Mus</taxon>
    </lineage>
</organism>
<keyword id="KW-0007">Acetylation</keyword>
<keyword id="KW-0025">Alternative splicing</keyword>
<keyword id="KW-0274">FAD</keyword>
<keyword id="KW-0276">Fatty acid metabolism</keyword>
<keyword id="KW-0285">Flavoprotein</keyword>
<keyword id="KW-0443">Lipid metabolism</keyword>
<keyword id="KW-0560">Oxidoreductase</keyword>
<keyword id="KW-0576">Peroxisome</keyword>
<keyword id="KW-0597">Phosphoprotein</keyword>
<keyword id="KW-1185">Reference proteome</keyword>